<proteinExistence type="inferred from homology"/>
<reference key="1">
    <citation type="journal article" date="2007" name="PLoS Biol.">
        <title>Evolution of symbiotic bacteria in the distal human intestine.</title>
        <authorList>
            <person name="Xu J."/>
            <person name="Mahowald M.A."/>
            <person name="Ley R.E."/>
            <person name="Lozupone C.A."/>
            <person name="Hamady M."/>
            <person name="Martens E.C."/>
            <person name="Henrissat B."/>
            <person name="Coutinho P.M."/>
            <person name="Minx P."/>
            <person name="Latreille P."/>
            <person name="Cordum H."/>
            <person name="Van Brunt A."/>
            <person name="Kim K."/>
            <person name="Fulton R.S."/>
            <person name="Fulton L.A."/>
            <person name="Clifton S.W."/>
            <person name="Wilson R.K."/>
            <person name="Knight R.D."/>
            <person name="Gordon J.I."/>
        </authorList>
    </citation>
    <scope>NUCLEOTIDE SEQUENCE [LARGE SCALE GENOMIC DNA]</scope>
    <source>
        <strain>ATCC 8503 / DSM 20701 / CIP 104284 / JCM 5825 / NCTC 11152</strain>
    </source>
</reference>
<organism>
    <name type="scientific">Parabacteroides distasonis (strain ATCC 8503 / DSM 20701 / CIP 104284 / JCM 5825 / NCTC 11152)</name>
    <dbReference type="NCBI Taxonomy" id="435591"/>
    <lineage>
        <taxon>Bacteria</taxon>
        <taxon>Pseudomonadati</taxon>
        <taxon>Bacteroidota</taxon>
        <taxon>Bacteroidia</taxon>
        <taxon>Bacteroidales</taxon>
        <taxon>Tannerellaceae</taxon>
        <taxon>Parabacteroides</taxon>
    </lineage>
</organism>
<name>RS6_PARD8</name>
<dbReference type="EMBL" id="CP000140">
    <property type="protein sequence ID" value="ABR45641.1"/>
    <property type="molecule type" value="Genomic_DNA"/>
</dbReference>
<dbReference type="RefSeq" id="WP_005865478.1">
    <property type="nucleotide sequence ID" value="NZ_LR215978.1"/>
</dbReference>
<dbReference type="SMR" id="A6LIX7"/>
<dbReference type="STRING" id="435591.BDI_3967"/>
<dbReference type="PaxDb" id="435591-BDI_3967"/>
<dbReference type="GeneID" id="93524142"/>
<dbReference type="KEGG" id="pdi:BDI_3967"/>
<dbReference type="eggNOG" id="COG0360">
    <property type="taxonomic scope" value="Bacteria"/>
</dbReference>
<dbReference type="HOGENOM" id="CLU_113441_4_3_10"/>
<dbReference type="BioCyc" id="PDIS435591:G1G5A-4078-MONOMER"/>
<dbReference type="Proteomes" id="UP000000566">
    <property type="component" value="Chromosome"/>
</dbReference>
<dbReference type="GO" id="GO:0005737">
    <property type="term" value="C:cytoplasm"/>
    <property type="evidence" value="ECO:0007669"/>
    <property type="project" value="UniProtKB-ARBA"/>
</dbReference>
<dbReference type="GO" id="GO:1990904">
    <property type="term" value="C:ribonucleoprotein complex"/>
    <property type="evidence" value="ECO:0007669"/>
    <property type="project" value="UniProtKB-KW"/>
</dbReference>
<dbReference type="GO" id="GO:0005840">
    <property type="term" value="C:ribosome"/>
    <property type="evidence" value="ECO:0007669"/>
    <property type="project" value="UniProtKB-KW"/>
</dbReference>
<dbReference type="GO" id="GO:0070181">
    <property type="term" value="F:small ribosomal subunit rRNA binding"/>
    <property type="evidence" value="ECO:0007669"/>
    <property type="project" value="TreeGrafter"/>
</dbReference>
<dbReference type="GO" id="GO:0003735">
    <property type="term" value="F:structural constituent of ribosome"/>
    <property type="evidence" value="ECO:0007669"/>
    <property type="project" value="InterPro"/>
</dbReference>
<dbReference type="GO" id="GO:0006412">
    <property type="term" value="P:translation"/>
    <property type="evidence" value="ECO:0007669"/>
    <property type="project" value="UniProtKB-UniRule"/>
</dbReference>
<dbReference type="CDD" id="cd00473">
    <property type="entry name" value="bS6"/>
    <property type="match status" value="1"/>
</dbReference>
<dbReference type="Gene3D" id="3.30.70.60">
    <property type="match status" value="1"/>
</dbReference>
<dbReference type="HAMAP" id="MF_00360">
    <property type="entry name" value="Ribosomal_bS6"/>
    <property type="match status" value="1"/>
</dbReference>
<dbReference type="InterPro" id="IPR000529">
    <property type="entry name" value="Ribosomal_bS6"/>
</dbReference>
<dbReference type="InterPro" id="IPR035980">
    <property type="entry name" value="Ribosomal_bS6_sf"/>
</dbReference>
<dbReference type="InterPro" id="IPR020814">
    <property type="entry name" value="Ribosomal_S6_plastid/chlpt"/>
</dbReference>
<dbReference type="InterPro" id="IPR014717">
    <property type="entry name" value="Transl_elong_EF1B/ribsomal_bS6"/>
</dbReference>
<dbReference type="NCBIfam" id="TIGR00166">
    <property type="entry name" value="S6"/>
    <property type="match status" value="1"/>
</dbReference>
<dbReference type="PANTHER" id="PTHR21011">
    <property type="entry name" value="MITOCHONDRIAL 28S RIBOSOMAL PROTEIN S6"/>
    <property type="match status" value="1"/>
</dbReference>
<dbReference type="PANTHER" id="PTHR21011:SF1">
    <property type="entry name" value="SMALL RIBOSOMAL SUBUNIT PROTEIN BS6M"/>
    <property type="match status" value="1"/>
</dbReference>
<dbReference type="Pfam" id="PF01250">
    <property type="entry name" value="Ribosomal_S6"/>
    <property type="match status" value="1"/>
</dbReference>
<dbReference type="SUPFAM" id="SSF54995">
    <property type="entry name" value="Ribosomal protein S6"/>
    <property type="match status" value="1"/>
</dbReference>
<gene>
    <name evidence="1" type="primary">rpsF</name>
    <name type="ordered locus">BDI_3967</name>
</gene>
<feature type="chain" id="PRO_1000005308" description="Small ribosomal subunit protein bS6">
    <location>
        <begin position="1"/>
        <end position="118"/>
    </location>
</feature>
<keyword id="KW-1185">Reference proteome</keyword>
<keyword id="KW-0687">Ribonucleoprotein</keyword>
<keyword id="KW-0689">Ribosomal protein</keyword>
<keyword id="KW-0694">RNA-binding</keyword>
<keyword id="KW-0699">rRNA-binding</keyword>
<protein>
    <recommendedName>
        <fullName evidence="1">Small ribosomal subunit protein bS6</fullName>
    </recommendedName>
    <alternativeName>
        <fullName evidence="2">30S ribosomal protein S6</fullName>
    </alternativeName>
</protein>
<sequence length="118" mass="13770">MNNYETVFILTPVLSDAQMKEAVEKFTNLLKAQGAEIVNEENWGLRKLAYPIDKKTTGFYQLVEFKADPSVIATLELNFRRDERVIRFLTFRQDKYAAEYAAKRRNLKSSKETVKENN</sequence>
<comment type="function">
    <text evidence="1">Binds together with bS18 to 16S ribosomal RNA.</text>
</comment>
<comment type="similarity">
    <text evidence="1">Belongs to the bacterial ribosomal protein bS6 family.</text>
</comment>
<accession>A6LIX7</accession>
<evidence type="ECO:0000255" key="1">
    <source>
        <dbReference type="HAMAP-Rule" id="MF_00360"/>
    </source>
</evidence>
<evidence type="ECO:0000305" key="2"/>